<gene>
    <name evidence="1" type="primary">yidC</name>
    <name type="ordered locus">Bpet5011</name>
</gene>
<evidence type="ECO:0000255" key="1">
    <source>
        <dbReference type="HAMAP-Rule" id="MF_01810"/>
    </source>
</evidence>
<evidence type="ECO:0000256" key="2">
    <source>
        <dbReference type="SAM" id="MobiDB-lite"/>
    </source>
</evidence>
<reference key="1">
    <citation type="journal article" date="2008" name="BMC Genomics">
        <title>The missing link: Bordetella petrii is endowed with both the metabolic versatility of environmental bacteria and virulence traits of pathogenic Bordetellae.</title>
        <authorList>
            <person name="Gross R."/>
            <person name="Guzman C.A."/>
            <person name="Sebaihia M."/>
            <person name="Martin dos Santos V.A.P."/>
            <person name="Pieper D.H."/>
            <person name="Koebnik R."/>
            <person name="Lechner M."/>
            <person name="Bartels D."/>
            <person name="Buhrmester J."/>
            <person name="Choudhuri J.V."/>
            <person name="Ebensen T."/>
            <person name="Gaigalat L."/>
            <person name="Herrmann S."/>
            <person name="Khachane A.N."/>
            <person name="Larisch C."/>
            <person name="Link S."/>
            <person name="Linke B."/>
            <person name="Meyer F."/>
            <person name="Mormann S."/>
            <person name="Nakunst D."/>
            <person name="Rueckert C."/>
            <person name="Schneiker-Bekel S."/>
            <person name="Schulze K."/>
            <person name="Voerholter F.-J."/>
            <person name="Yevsa T."/>
            <person name="Engle J.T."/>
            <person name="Goldman W.E."/>
            <person name="Puehler A."/>
            <person name="Goebel U.B."/>
            <person name="Goesmann A."/>
            <person name="Bloecker H."/>
            <person name="Kaiser O."/>
            <person name="Martinez-Arias R."/>
        </authorList>
    </citation>
    <scope>NUCLEOTIDE SEQUENCE [LARGE SCALE GENOMIC DNA]</scope>
    <source>
        <strain>ATCC BAA-461 / DSM 12804 / CCUG 43448</strain>
    </source>
</reference>
<name>YIDC_BORPD</name>
<keyword id="KW-0997">Cell inner membrane</keyword>
<keyword id="KW-1003">Cell membrane</keyword>
<keyword id="KW-0143">Chaperone</keyword>
<keyword id="KW-0472">Membrane</keyword>
<keyword id="KW-0653">Protein transport</keyword>
<keyword id="KW-0812">Transmembrane</keyword>
<keyword id="KW-1133">Transmembrane helix</keyword>
<keyword id="KW-0813">Transport</keyword>
<feature type="chain" id="PRO_1000187634" description="Membrane protein insertase YidC">
    <location>
        <begin position="1"/>
        <end position="563"/>
    </location>
</feature>
<feature type="transmembrane region" description="Helical" evidence="1">
    <location>
        <begin position="6"/>
        <end position="26"/>
    </location>
</feature>
<feature type="transmembrane region" description="Helical" evidence="1">
    <location>
        <begin position="373"/>
        <end position="393"/>
    </location>
</feature>
<feature type="transmembrane region" description="Helical" evidence="1">
    <location>
        <begin position="443"/>
        <end position="463"/>
    </location>
</feature>
<feature type="transmembrane region" description="Helical" evidence="1">
    <location>
        <begin position="482"/>
        <end position="502"/>
    </location>
</feature>
<feature type="transmembrane region" description="Helical" evidence="1">
    <location>
        <begin position="512"/>
        <end position="532"/>
    </location>
</feature>
<feature type="region of interest" description="Disordered" evidence="2">
    <location>
        <begin position="36"/>
        <end position="68"/>
    </location>
</feature>
<sequence>MDIRRTILWMIFSFSLLLLWNNWQIHNGKPSLFGTPPASSAASPAEGQQAAANGQAATPSVPTTPAAAAASTVPGATAAPAAAKVEQVVVSTDVLRLTFDTTGAQLIRAELLKYPTSGQPNKPTVLLDRSPELTYVVQSGLVGAPNGQSFPNHQTPFRLVSTDHELKGDSLQVVFEADSGGLKVTKTYTLHRGRYDIDVQHSLANTSDAPLAPSLYLQLERDGNDPADTSSFYHTFTGVAVYSEQDKFQKITFSDIAKGKGSYIKQADNGWLAVVQHYFATAWVPPQGKQRTNELLQVQPNLYAARSIEAVGTVQPGATAQVDSRLWVGPQDQKAMAAVAPGLELVVDYGWLTIIAKPLFSLLTWLHSLLGNWGWAIVALTVIIKAVFFPLAAASYRSMARMKQVAPRLQALKEKYGDDRQKLNQAMMEMYRTEKINPLGGCLPMVVQIPVFIALYWVLLASVEMRGAPWILWVHDLSVRDPYFILPAVMMATMFLQIKLNPTPPDPIQAKVMMIMPLVFGGMMFFFPAGLVLYWCVNNTLSIAQQWTITRNLQRKAEAAANR</sequence>
<dbReference type="EMBL" id="AM902716">
    <property type="protein sequence ID" value="CAP45363.1"/>
    <property type="molecule type" value="Genomic_DNA"/>
</dbReference>
<dbReference type="SMR" id="A9IJB7"/>
<dbReference type="STRING" id="94624.Bpet5011"/>
<dbReference type="KEGG" id="bpt:Bpet5011"/>
<dbReference type="eggNOG" id="COG0706">
    <property type="taxonomic scope" value="Bacteria"/>
</dbReference>
<dbReference type="Proteomes" id="UP000001225">
    <property type="component" value="Chromosome"/>
</dbReference>
<dbReference type="GO" id="GO:0005886">
    <property type="term" value="C:plasma membrane"/>
    <property type="evidence" value="ECO:0007669"/>
    <property type="project" value="UniProtKB-SubCell"/>
</dbReference>
<dbReference type="GO" id="GO:0032977">
    <property type="term" value="F:membrane insertase activity"/>
    <property type="evidence" value="ECO:0007669"/>
    <property type="project" value="InterPro"/>
</dbReference>
<dbReference type="GO" id="GO:0051205">
    <property type="term" value="P:protein insertion into membrane"/>
    <property type="evidence" value="ECO:0007669"/>
    <property type="project" value="TreeGrafter"/>
</dbReference>
<dbReference type="GO" id="GO:0015031">
    <property type="term" value="P:protein transport"/>
    <property type="evidence" value="ECO:0007669"/>
    <property type="project" value="UniProtKB-KW"/>
</dbReference>
<dbReference type="CDD" id="cd20070">
    <property type="entry name" value="5TM_YidC_Alb3"/>
    <property type="match status" value="1"/>
</dbReference>
<dbReference type="CDD" id="cd19961">
    <property type="entry name" value="EcYidC-like_peri"/>
    <property type="match status" value="1"/>
</dbReference>
<dbReference type="Gene3D" id="2.70.98.90">
    <property type="match status" value="1"/>
</dbReference>
<dbReference type="HAMAP" id="MF_01810">
    <property type="entry name" value="YidC_type1"/>
    <property type="match status" value="1"/>
</dbReference>
<dbReference type="InterPro" id="IPR019998">
    <property type="entry name" value="Membr_insert_YidC"/>
</dbReference>
<dbReference type="InterPro" id="IPR028053">
    <property type="entry name" value="Membr_insert_YidC_N"/>
</dbReference>
<dbReference type="InterPro" id="IPR001708">
    <property type="entry name" value="YidC/ALB3/OXA1/COX18"/>
</dbReference>
<dbReference type="InterPro" id="IPR028055">
    <property type="entry name" value="YidC/Oxa/ALB_C"/>
</dbReference>
<dbReference type="InterPro" id="IPR047196">
    <property type="entry name" value="YidC_ALB_C"/>
</dbReference>
<dbReference type="InterPro" id="IPR038221">
    <property type="entry name" value="YidC_periplasmic_sf"/>
</dbReference>
<dbReference type="NCBIfam" id="NF002352">
    <property type="entry name" value="PRK01318.1-3"/>
    <property type="match status" value="1"/>
</dbReference>
<dbReference type="NCBIfam" id="NF002353">
    <property type="entry name" value="PRK01318.1-4"/>
    <property type="match status" value="1"/>
</dbReference>
<dbReference type="NCBIfam" id="TIGR03593">
    <property type="entry name" value="yidC_nterm"/>
    <property type="match status" value="1"/>
</dbReference>
<dbReference type="NCBIfam" id="TIGR03592">
    <property type="entry name" value="yidC_oxa1_cterm"/>
    <property type="match status" value="1"/>
</dbReference>
<dbReference type="PANTHER" id="PTHR12428:SF65">
    <property type="entry name" value="CYTOCHROME C OXIDASE ASSEMBLY PROTEIN COX18, MITOCHONDRIAL"/>
    <property type="match status" value="1"/>
</dbReference>
<dbReference type="PANTHER" id="PTHR12428">
    <property type="entry name" value="OXA1"/>
    <property type="match status" value="1"/>
</dbReference>
<dbReference type="Pfam" id="PF02096">
    <property type="entry name" value="60KD_IMP"/>
    <property type="match status" value="1"/>
</dbReference>
<dbReference type="Pfam" id="PF14849">
    <property type="entry name" value="YidC_periplas"/>
    <property type="match status" value="1"/>
</dbReference>
<dbReference type="PRINTS" id="PR00701">
    <property type="entry name" value="60KDINNERMP"/>
</dbReference>
<dbReference type="PRINTS" id="PR01900">
    <property type="entry name" value="YIDCPROTEIN"/>
</dbReference>
<proteinExistence type="inferred from homology"/>
<protein>
    <recommendedName>
        <fullName evidence="1">Membrane protein insertase YidC</fullName>
    </recommendedName>
    <alternativeName>
        <fullName evidence="1">Foldase YidC</fullName>
    </alternativeName>
    <alternativeName>
        <fullName evidence="1">Membrane integrase YidC</fullName>
    </alternativeName>
    <alternativeName>
        <fullName evidence="1">Membrane protein YidC</fullName>
    </alternativeName>
</protein>
<organism>
    <name type="scientific">Bordetella petrii (strain ATCC BAA-461 / DSM 12804 / CCUG 43448)</name>
    <dbReference type="NCBI Taxonomy" id="340100"/>
    <lineage>
        <taxon>Bacteria</taxon>
        <taxon>Pseudomonadati</taxon>
        <taxon>Pseudomonadota</taxon>
        <taxon>Betaproteobacteria</taxon>
        <taxon>Burkholderiales</taxon>
        <taxon>Alcaligenaceae</taxon>
        <taxon>Bordetella</taxon>
    </lineage>
</organism>
<accession>A9IJB7</accession>
<comment type="function">
    <text evidence="1">Required for the insertion and/or proper folding and/or complex formation of integral membrane proteins into the membrane. Involved in integration of membrane proteins that insert both dependently and independently of the Sec translocase complex, as well as at least some lipoproteins. Aids folding of multispanning membrane proteins.</text>
</comment>
<comment type="subunit">
    <text evidence="1">Interacts with the Sec translocase complex via SecD. Specifically interacts with transmembrane segments of nascent integral membrane proteins during membrane integration.</text>
</comment>
<comment type="subcellular location">
    <subcellularLocation>
        <location evidence="1">Cell inner membrane</location>
        <topology evidence="1">Multi-pass membrane protein</topology>
    </subcellularLocation>
</comment>
<comment type="similarity">
    <text evidence="1">Belongs to the OXA1/ALB3/YidC family. Type 1 subfamily.</text>
</comment>